<reference key="1">
    <citation type="journal article" date="2009" name="BMC Microbiol.">
        <title>The genome sequence of Geobacter metallireducens: features of metabolism, physiology and regulation common and dissimilar to Geobacter sulfurreducens.</title>
        <authorList>
            <person name="Aklujkar M."/>
            <person name="Krushkal J."/>
            <person name="DiBartolo G."/>
            <person name="Lapidus A."/>
            <person name="Land M.L."/>
            <person name="Lovley D.R."/>
        </authorList>
    </citation>
    <scope>NUCLEOTIDE SEQUENCE [LARGE SCALE GENOMIC DNA]</scope>
    <source>
        <strain>ATCC 53774 / DSM 7210 / GS-15</strain>
    </source>
</reference>
<gene>
    <name evidence="1" type="primary">accA</name>
    <name type="ordered locus">Gmet_1216</name>
</gene>
<feature type="chain" id="PRO_1000062625" description="Acetyl-coenzyme A carboxylase carboxyl transferase subunit alpha">
    <location>
        <begin position="1"/>
        <end position="318"/>
    </location>
</feature>
<feature type="domain" description="CoA carboxyltransferase C-terminal" evidence="2">
    <location>
        <begin position="39"/>
        <end position="293"/>
    </location>
</feature>
<name>ACCA_GEOMG</name>
<organism>
    <name type="scientific">Geobacter metallireducens (strain ATCC 53774 / DSM 7210 / GS-15)</name>
    <dbReference type="NCBI Taxonomy" id="269799"/>
    <lineage>
        <taxon>Bacteria</taxon>
        <taxon>Pseudomonadati</taxon>
        <taxon>Thermodesulfobacteriota</taxon>
        <taxon>Desulfuromonadia</taxon>
        <taxon>Geobacterales</taxon>
        <taxon>Geobacteraceae</taxon>
        <taxon>Geobacter</taxon>
    </lineage>
</organism>
<accession>Q39WC1</accession>
<comment type="function">
    <text evidence="1">Component of the acetyl coenzyme A carboxylase (ACC) complex. First, biotin carboxylase catalyzes the carboxylation of biotin on its carrier protein (BCCP) and then the CO(2) group is transferred by the carboxyltransferase to acetyl-CoA to form malonyl-CoA.</text>
</comment>
<comment type="catalytic activity">
    <reaction evidence="1">
        <text>N(6)-carboxybiotinyl-L-lysyl-[protein] + acetyl-CoA = N(6)-biotinyl-L-lysyl-[protein] + malonyl-CoA</text>
        <dbReference type="Rhea" id="RHEA:54728"/>
        <dbReference type="Rhea" id="RHEA-COMP:10505"/>
        <dbReference type="Rhea" id="RHEA-COMP:10506"/>
        <dbReference type="ChEBI" id="CHEBI:57288"/>
        <dbReference type="ChEBI" id="CHEBI:57384"/>
        <dbReference type="ChEBI" id="CHEBI:83144"/>
        <dbReference type="ChEBI" id="CHEBI:83145"/>
        <dbReference type="EC" id="2.1.3.15"/>
    </reaction>
</comment>
<comment type="pathway">
    <text evidence="1">Lipid metabolism; malonyl-CoA biosynthesis; malonyl-CoA from acetyl-CoA: step 1/1.</text>
</comment>
<comment type="subunit">
    <text evidence="1">Acetyl-CoA carboxylase is a heterohexamer composed of biotin carboxyl carrier protein (AccB), biotin carboxylase (AccC) and two subunits each of ACCase subunit alpha (AccA) and ACCase subunit beta (AccD).</text>
</comment>
<comment type="subcellular location">
    <subcellularLocation>
        <location evidence="1">Cytoplasm</location>
    </subcellularLocation>
</comment>
<comment type="similarity">
    <text evidence="1">Belongs to the AccA family.</text>
</comment>
<dbReference type="EC" id="2.1.3.15" evidence="1"/>
<dbReference type="EMBL" id="CP000148">
    <property type="protein sequence ID" value="ABB31453.1"/>
    <property type="molecule type" value="Genomic_DNA"/>
</dbReference>
<dbReference type="RefSeq" id="WP_004512154.1">
    <property type="nucleotide sequence ID" value="NC_007517.1"/>
</dbReference>
<dbReference type="SMR" id="Q39WC1"/>
<dbReference type="STRING" id="269799.Gmet_1216"/>
<dbReference type="KEGG" id="gme:Gmet_1216"/>
<dbReference type="eggNOG" id="COG0825">
    <property type="taxonomic scope" value="Bacteria"/>
</dbReference>
<dbReference type="HOGENOM" id="CLU_015486_0_2_7"/>
<dbReference type="UniPathway" id="UPA00655">
    <property type="reaction ID" value="UER00711"/>
</dbReference>
<dbReference type="Proteomes" id="UP000007073">
    <property type="component" value="Chromosome"/>
</dbReference>
<dbReference type="GO" id="GO:0009317">
    <property type="term" value="C:acetyl-CoA carboxylase complex"/>
    <property type="evidence" value="ECO:0007669"/>
    <property type="project" value="InterPro"/>
</dbReference>
<dbReference type="GO" id="GO:0003989">
    <property type="term" value="F:acetyl-CoA carboxylase activity"/>
    <property type="evidence" value="ECO:0007669"/>
    <property type="project" value="InterPro"/>
</dbReference>
<dbReference type="GO" id="GO:0005524">
    <property type="term" value="F:ATP binding"/>
    <property type="evidence" value="ECO:0007669"/>
    <property type="project" value="UniProtKB-KW"/>
</dbReference>
<dbReference type="GO" id="GO:0016743">
    <property type="term" value="F:carboxyl- or carbamoyltransferase activity"/>
    <property type="evidence" value="ECO:0007669"/>
    <property type="project" value="UniProtKB-UniRule"/>
</dbReference>
<dbReference type="GO" id="GO:0006633">
    <property type="term" value="P:fatty acid biosynthetic process"/>
    <property type="evidence" value="ECO:0007669"/>
    <property type="project" value="UniProtKB-KW"/>
</dbReference>
<dbReference type="GO" id="GO:2001295">
    <property type="term" value="P:malonyl-CoA biosynthetic process"/>
    <property type="evidence" value="ECO:0007669"/>
    <property type="project" value="UniProtKB-UniRule"/>
</dbReference>
<dbReference type="Gene3D" id="3.90.226.10">
    <property type="entry name" value="2-enoyl-CoA Hydratase, Chain A, domain 1"/>
    <property type="match status" value="1"/>
</dbReference>
<dbReference type="HAMAP" id="MF_00823">
    <property type="entry name" value="AcetylCoA_CT_alpha"/>
    <property type="match status" value="1"/>
</dbReference>
<dbReference type="InterPro" id="IPR001095">
    <property type="entry name" value="Acetyl_CoA_COase_a_su"/>
</dbReference>
<dbReference type="InterPro" id="IPR029045">
    <property type="entry name" value="ClpP/crotonase-like_dom_sf"/>
</dbReference>
<dbReference type="InterPro" id="IPR011763">
    <property type="entry name" value="COA_CT_C"/>
</dbReference>
<dbReference type="NCBIfam" id="TIGR00513">
    <property type="entry name" value="accA"/>
    <property type="match status" value="1"/>
</dbReference>
<dbReference type="NCBIfam" id="NF041504">
    <property type="entry name" value="AccA_sub"/>
    <property type="match status" value="1"/>
</dbReference>
<dbReference type="NCBIfam" id="NF004344">
    <property type="entry name" value="PRK05724.1"/>
    <property type="match status" value="1"/>
</dbReference>
<dbReference type="PANTHER" id="PTHR42853">
    <property type="entry name" value="ACETYL-COENZYME A CARBOXYLASE CARBOXYL TRANSFERASE SUBUNIT ALPHA"/>
    <property type="match status" value="1"/>
</dbReference>
<dbReference type="PANTHER" id="PTHR42853:SF3">
    <property type="entry name" value="ACETYL-COENZYME A CARBOXYLASE CARBOXYL TRANSFERASE SUBUNIT ALPHA, CHLOROPLASTIC"/>
    <property type="match status" value="1"/>
</dbReference>
<dbReference type="Pfam" id="PF03255">
    <property type="entry name" value="ACCA"/>
    <property type="match status" value="1"/>
</dbReference>
<dbReference type="PRINTS" id="PR01069">
    <property type="entry name" value="ACCCTRFRASEA"/>
</dbReference>
<dbReference type="SUPFAM" id="SSF52096">
    <property type="entry name" value="ClpP/crotonase"/>
    <property type="match status" value="1"/>
</dbReference>
<dbReference type="PROSITE" id="PS50989">
    <property type="entry name" value="COA_CT_CTER"/>
    <property type="match status" value="1"/>
</dbReference>
<keyword id="KW-0067">ATP-binding</keyword>
<keyword id="KW-0963">Cytoplasm</keyword>
<keyword id="KW-0275">Fatty acid biosynthesis</keyword>
<keyword id="KW-0276">Fatty acid metabolism</keyword>
<keyword id="KW-0444">Lipid biosynthesis</keyword>
<keyword id="KW-0443">Lipid metabolism</keyword>
<keyword id="KW-0547">Nucleotide-binding</keyword>
<keyword id="KW-1185">Reference proteome</keyword>
<keyword id="KW-0808">Transferase</keyword>
<proteinExistence type="inferred from homology"/>
<sequence length="318" mass="35559">MASQYQLEFEKPVFELEQKIQELADIAGDNVELKTEVVKLEKKVDKMREVIFANLSRWQMVQVARHIDRPFTLDYLTHIFTDFVELHGDRLFGDDHAIVGGMAKLDGEPVMVIGHQKGRDTKEKVYRNFGMPNPEGYRKALRLMEMAERFRMPIITFVDTPGAYPGIGAEERGQAEAIARNLREMAALTVPIIVVITGEGGSGGALAIAVGDRVLMLEYSIYAVISPEGCAAILWSDGTKGAQAAEALKLTAPDLKELDVIDEIVKEPLGGAHRDHETMAKNLHEALARHLKELKALSVEQLVEGRYQKFRKMSRFAE</sequence>
<evidence type="ECO:0000255" key="1">
    <source>
        <dbReference type="HAMAP-Rule" id="MF_00823"/>
    </source>
</evidence>
<evidence type="ECO:0000255" key="2">
    <source>
        <dbReference type="PROSITE-ProRule" id="PRU01137"/>
    </source>
</evidence>
<protein>
    <recommendedName>
        <fullName evidence="1">Acetyl-coenzyme A carboxylase carboxyl transferase subunit alpha</fullName>
        <shortName evidence="1">ACCase subunit alpha</shortName>
        <shortName evidence="1">Acetyl-CoA carboxylase carboxyltransferase subunit alpha</shortName>
        <ecNumber evidence="1">2.1.3.15</ecNumber>
    </recommendedName>
</protein>